<reference key="1">
    <citation type="journal article" date="2010" name="Genome Biol. Evol.">
        <title>Continuing evolution of Burkholderia mallei through genome reduction and large-scale rearrangements.</title>
        <authorList>
            <person name="Losada L."/>
            <person name="Ronning C.M."/>
            <person name="DeShazer D."/>
            <person name="Woods D."/>
            <person name="Fedorova N."/>
            <person name="Kim H.S."/>
            <person name="Shabalina S.A."/>
            <person name="Pearson T.R."/>
            <person name="Brinkac L."/>
            <person name="Tan P."/>
            <person name="Nandi T."/>
            <person name="Crabtree J."/>
            <person name="Badger J."/>
            <person name="Beckstrom-Sternberg S."/>
            <person name="Saqib M."/>
            <person name="Schutzer S.E."/>
            <person name="Keim P."/>
            <person name="Nierman W.C."/>
        </authorList>
    </citation>
    <scope>NUCLEOTIDE SEQUENCE [LARGE SCALE GENOMIC DNA]</scope>
    <source>
        <strain>NCTC 10247</strain>
    </source>
</reference>
<proteinExistence type="inferred from homology"/>
<dbReference type="EC" id="2.1.3.15" evidence="1"/>
<dbReference type="EMBL" id="CP000548">
    <property type="protein sequence ID" value="ABO07172.1"/>
    <property type="molecule type" value="Genomic_DNA"/>
</dbReference>
<dbReference type="RefSeq" id="WP_004193249.1">
    <property type="nucleotide sequence ID" value="NZ_CP007802.1"/>
</dbReference>
<dbReference type="SMR" id="A3ML41"/>
<dbReference type="KEGG" id="bmaz:BM44_1711"/>
<dbReference type="KEGG" id="bmn:BMA10247_1430"/>
<dbReference type="PATRIC" id="fig|320389.8.peg.1915"/>
<dbReference type="UniPathway" id="UPA00655">
    <property type="reaction ID" value="UER00711"/>
</dbReference>
<dbReference type="GO" id="GO:0009317">
    <property type="term" value="C:acetyl-CoA carboxylase complex"/>
    <property type="evidence" value="ECO:0007669"/>
    <property type="project" value="InterPro"/>
</dbReference>
<dbReference type="GO" id="GO:0003989">
    <property type="term" value="F:acetyl-CoA carboxylase activity"/>
    <property type="evidence" value="ECO:0007669"/>
    <property type="project" value="InterPro"/>
</dbReference>
<dbReference type="GO" id="GO:0005524">
    <property type="term" value="F:ATP binding"/>
    <property type="evidence" value="ECO:0007669"/>
    <property type="project" value="UniProtKB-KW"/>
</dbReference>
<dbReference type="GO" id="GO:0016743">
    <property type="term" value="F:carboxyl- or carbamoyltransferase activity"/>
    <property type="evidence" value="ECO:0007669"/>
    <property type="project" value="UniProtKB-UniRule"/>
</dbReference>
<dbReference type="GO" id="GO:0006633">
    <property type="term" value="P:fatty acid biosynthetic process"/>
    <property type="evidence" value="ECO:0007669"/>
    <property type="project" value="UniProtKB-KW"/>
</dbReference>
<dbReference type="GO" id="GO:2001295">
    <property type="term" value="P:malonyl-CoA biosynthetic process"/>
    <property type="evidence" value="ECO:0007669"/>
    <property type="project" value="UniProtKB-UniRule"/>
</dbReference>
<dbReference type="Gene3D" id="3.90.226.10">
    <property type="entry name" value="2-enoyl-CoA Hydratase, Chain A, domain 1"/>
    <property type="match status" value="1"/>
</dbReference>
<dbReference type="HAMAP" id="MF_00823">
    <property type="entry name" value="AcetylCoA_CT_alpha"/>
    <property type="match status" value="1"/>
</dbReference>
<dbReference type="InterPro" id="IPR001095">
    <property type="entry name" value="Acetyl_CoA_COase_a_su"/>
</dbReference>
<dbReference type="InterPro" id="IPR029045">
    <property type="entry name" value="ClpP/crotonase-like_dom_sf"/>
</dbReference>
<dbReference type="InterPro" id="IPR011763">
    <property type="entry name" value="COA_CT_C"/>
</dbReference>
<dbReference type="NCBIfam" id="TIGR00513">
    <property type="entry name" value="accA"/>
    <property type="match status" value="1"/>
</dbReference>
<dbReference type="NCBIfam" id="NF041504">
    <property type="entry name" value="AccA_sub"/>
    <property type="match status" value="1"/>
</dbReference>
<dbReference type="NCBIfam" id="NF004344">
    <property type="entry name" value="PRK05724.1"/>
    <property type="match status" value="1"/>
</dbReference>
<dbReference type="PANTHER" id="PTHR42853">
    <property type="entry name" value="ACETYL-COENZYME A CARBOXYLASE CARBOXYL TRANSFERASE SUBUNIT ALPHA"/>
    <property type="match status" value="1"/>
</dbReference>
<dbReference type="PANTHER" id="PTHR42853:SF3">
    <property type="entry name" value="ACETYL-COENZYME A CARBOXYLASE CARBOXYL TRANSFERASE SUBUNIT ALPHA, CHLOROPLASTIC"/>
    <property type="match status" value="1"/>
</dbReference>
<dbReference type="Pfam" id="PF03255">
    <property type="entry name" value="ACCA"/>
    <property type="match status" value="1"/>
</dbReference>
<dbReference type="PRINTS" id="PR01069">
    <property type="entry name" value="ACCCTRFRASEA"/>
</dbReference>
<dbReference type="SUPFAM" id="SSF52096">
    <property type="entry name" value="ClpP/crotonase"/>
    <property type="match status" value="1"/>
</dbReference>
<dbReference type="PROSITE" id="PS50989">
    <property type="entry name" value="COA_CT_CTER"/>
    <property type="match status" value="1"/>
</dbReference>
<evidence type="ECO:0000255" key="1">
    <source>
        <dbReference type="HAMAP-Rule" id="MF_00823"/>
    </source>
</evidence>
<evidence type="ECO:0000255" key="2">
    <source>
        <dbReference type="PROSITE-ProRule" id="PRU01137"/>
    </source>
</evidence>
<protein>
    <recommendedName>
        <fullName evidence="1">Acetyl-coenzyme A carboxylase carboxyl transferase subunit alpha</fullName>
        <shortName evidence="1">ACCase subunit alpha</shortName>
        <shortName evidence="1">Acetyl-CoA carboxylase carboxyltransferase subunit alpha</shortName>
        <ecNumber evidence="1">2.1.3.15</ecNumber>
    </recommendedName>
</protein>
<feature type="chain" id="PRO_1000062588" description="Acetyl-coenzyme A carboxylase carboxyl transferase subunit alpha">
    <location>
        <begin position="1"/>
        <end position="323"/>
    </location>
</feature>
<feature type="domain" description="CoA carboxyltransferase C-terminal" evidence="2">
    <location>
        <begin position="39"/>
        <end position="293"/>
    </location>
</feature>
<organism>
    <name type="scientific">Burkholderia mallei (strain NCTC 10247)</name>
    <dbReference type="NCBI Taxonomy" id="320389"/>
    <lineage>
        <taxon>Bacteria</taxon>
        <taxon>Pseudomonadati</taxon>
        <taxon>Pseudomonadota</taxon>
        <taxon>Betaproteobacteria</taxon>
        <taxon>Burkholderiales</taxon>
        <taxon>Burkholderiaceae</taxon>
        <taxon>Burkholderia</taxon>
        <taxon>pseudomallei group</taxon>
    </lineage>
</organism>
<gene>
    <name evidence="1" type="primary">accA</name>
    <name type="ordered locus">BMA10247_1430</name>
</gene>
<accession>A3ML41</accession>
<sequence>MKTTFLDFEQPIAELEAKIEELRFVQDDSAVDISEEIERLSKKSQQLTKDLYANLTPWQVSQIARHPQRPYTLDYVSELFTDFHELHGDRAFADDQSIVGGLARFNGHACMVIGHQKGRDTKERAARNFGMPRPEGYRKAERLMRVAEKFGLPIFTFVDTPGAYPGVGAEERGQSEAIGHNLYVMAELKTPIIATVIGEGGSGGALAIAVADTVMMLQFSTYSVISPEGCASILWKSAAKAPEAAEALGLTAHRLKALGLIDKIVNEPLGGAHRDPKGMAALLRRALGDSLRQFQGMSVDALRERRFERLMAYGKFKETTPRA</sequence>
<keyword id="KW-0067">ATP-binding</keyword>
<keyword id="KW-0963">Cytoplasm</keyword>
<keyword id="KW-0275">Fatty acid biosynthesis</keyword>
<keyword id="KW-0276">Fatty acid metabolism</keyword>
<keyword id="KW-0444">Lipid biosynthesis</keyword>
<keyword id="KW-0443">Lipid metabolism</keyword>
<keyword id="KW-0547">Nucleotide-binding</keyword>
<keyword id="KW-0808">Transferase</keyword>
<comment type="function">
    <text evidence="1">Component of the acetyl coenzyme A carboxylase (ACC) complex. First, biotin carboxylase catalyzes the carboxylation of biotin on its carrier protein (BCCP) and then the CO(2) group is transferred by the carboxyltransferase to acetyl-CoA to form malonyl-CoA.</text>
</comment>
<comment type="catalytic activity">
    <reaction evidence="1">
        <text>N(6)-carboxybiotinyl-L-lysyl-[protein] + acetyl-CoA = N(6)-biotinyl-L-lysyl-[protein] + malonyl-CoA</text>
        <dbReference type="Rhea" id="RHEA:54728"/>
        <dbReference type="Rhea" id="RHEA-COMP:10505"/>
        <dbReference type="Rhea" id="RHEA-COMP:10506"/>
        <dbReference type="ChEBI" id="CHEBI:57288"/>
        <dbReference type="ChEBI" id="CHEBI:57384"/>
        <dbReference type="ChEBI" id="CHEBI:83144"/>
        <dbReference type="ChEBI" id="CHEBI:83145"/>
        <dbReference type="EC" id="2.1.3.15"/>
    </reaction>
</comment>
<comment type="pathway">
    <text evidence="1">Lipid metabolism; malonyl-CoA biosynthesis; malonyl-CoA from acetyl-CoA: step 1/1.</text>
</comment>
<comment type="subunit">
    <text evidence="1">Acetyl-CoA carboxylase is a heterohexamer composed of biotin carboxyl carrier protein (AccB), biotin carboxylase (AccC) and two subunits each of ACCase subunit alpha (AccA) and ACCase subunit beta (AccD).</text>
</comment>
<comment type="subcellular location">
    <subcellularLocation>
        <location evidence="1">Cytoplasm</location>
    </subcellularLocation>
</comment>
<comment type="similarity">
    <text evidence="1">Belongs to the AccA family.</text>
</comment>
<name>ACCA_BURM7</name>